<dbReference type="EMBL" id="BC135902">
    <property type="protein sequence ID" value="AAI35903.1"/>
    <property type="molecule type" value="mRNA"/>
</dbReference>
<dbReference type="RefSeq" id="NP_001096370.1">
    <property type="nucleotide sequence ID" value="NM_001102900.1"/>
</dbReference>
<dbReference type="RefSeq" id="XP_012820263.1">
    <property type="nucleotide sequence ID" value="XM_012964809.3"/>
</dbReference>
<dbReference type="RefSeq" id="XP_031757468.1">
    <property type="nucleotide sequence ID" value="XM_031901608.1"/>
</dbReference>
<dbReference type="FunCoup" id="A4II83">
    <property type="interactions" value="227"/>
</dbReference>
<dbReference type="STRING" id="8364.ENSXETP00000003408"/>
<dbReference type="GlyCosmos" id="A4II83">
    <property type="glycosylation" value="2 sites, No reported glycans"/>
</dbReference>
<dbReference type="PaxDb" id="8364-ENSXETP00000061844"/>
<dbReference type="DNASU" id="100124964"/>
<dbReference type="GeneID" id="100124964"/>
<dbReference type="KEGG" id="xtr:100124964"/>
<dbReference type="AGR" id="Xenbase:XB-GENE-974061"/>
<dbReference type="CTD" id="54886"/>
<dbReference type="Xenbase" id="XB-GENE-974061">
    <property type="gene designation" value="plppr1"/>
</dbReference>
<dbReference type="eggNOG" id="KOG3030">
    <property type="taxonomic scope" value="Eukaryota"/>
</dbReference>
<dbReference type="HOGENOM" id="CLU_021458_1_0_1"/>
<dbReference type="InParanoid" id="A4II83"/>
<dbReference type="OMA" id="CRAHHEF"/>
<dbReference type="OrthoDB" id="10030083at2759"/>
<dbReference type="PhylomeDB" id="A4II83"/>
<dbReference type="TreeFam" id="TF316040"/>
<dbReference type="Reactome" id="R-XTR-419408">
    <property type="pathway name" value="Lysosphingolipid and LPA receptors"/>
</dbReference>
<dbReference type="Proteomes" id="UP000008143">
    <property type="component" value="Chromosome 1"/>
</dbReference>
<dbReference type="Bgee" id="ENSXETG00000033877">
    <property type="expression patterns" value="Expressed in brain and 2 other cell types or tissues"/>
</dbReference>
<dbReference type="ExpressionAtlas" id="A4II83">
    <property type="expression patterns" value="differential"/>
</dbReference>
<dbReference type="GO" id="GO:0043005">
    <property type="term" value="C:neuron projection"/>
    <property type="evidence" value="ECO:0000250"/>
    <property type="project" value="UniProtKB"/>
</dbReference>
<dbReference type="GO" id="GO:0005886">
    <property type="term" value="C:plasma membrane"/>
    <property type="evidence" value="ECO:0000250"/>
    <property type="project" value="UniProtKB"/>
</dbReference>
<dbReference type="GO" id="GO:0007399">
    <property type="term" value="P:nervous system development"/>
    <property type="evidence" value="ECO:0000250"/>
    <property type="project" value="UniProtKB"/>
</dbReference>
<dbReference type="GO" id="GO:0006644">
    <property type="term" value="P:phospholipid metabolic process"/>
    <property type="evidence" value="ECO:0007669"/>
    <property type="project" value="InterPro"/>
</dbReference>
<dbReference type="CDD" id="cd03384">
    <property type="entry name" value="PAP2_wunen"/>
    <property type="match status" value="1"/>
</dbReference>
<dbReference type="FunFam" id="1.20.144.10:FF:000005">
    <property type="entry name" value="phospholipid phosphatase-related protein type 1"/>
    <property type="match status" value="1"/>
</dbReference>
<dbReference type="Gene3D" id="1.20.144.10">
    <property type="entry name" value="Phosphatidic acid phosphatase type 2/haloperoxidase"/>
    <property type="match status" value="1"/>
</dbReference>
<dbReference type="InterPro" id="IPR036938">
    <property type="entry name" value="P_Acid_Pase_2/haloperoxi_sf"/>
</dbReference>
<dbReference type="InterPro" id="IPR000326">
    <property type="entry name" value="P_Acid_Pase_2/haloperoxidase"/>
</dbReference>
<dbReference type="InterPro" id="IPR043216">
    <property type="entry name" value="PA_PP_rel"/>
</dbReference>
<dbReference type="PANTHER" id="PTHR10165">
    <property type="entry name" value="LIPID PHOSPHATE PHOSPHATASE"/>
    <property type="match status" value="1"/>
</dbReference>
<dbReference type="PANTHER" id="PTHR10165:SF41">
    <property type="entry name" value="PHOSPHOLIPID PHOSPHATASE-RELATED PROTEIN TYPE 1"/>
    <property type="match status" value="1"/>
</dbReference>
<dbReference type="Pfam" id="PF01569">
    <property type="entry name" value="PAP2"/>
    <property type="match status" value="1"/>
</dbReference>
<dbReference type="SMART" id="SM00014">
    <property type="entry name" value="acidPPc"/>
    <property type="match status" value="1"/>
</dbReference>
<dbReference type="SUPFAM" id="SSF48317">
    <property type="entry name" value="Acid phosphatase/Vanadium-dependent haloperoxidase"/>
    <property type="match status" value="1"/>
</dbReference>
<reference key="1">
    <citation type="submission" date="2007-03" db="EMBL/GenBank/DDBJ databases">
        <authorList>
            <consortium name="NIH - Xenopus Gene Collection (XGC) project"/>
        </authorList>
    </citation>
    <scope>NUCLEOTIDE SEQUENCE [LARGE SCALE MRNA]</scope>
    <source>
        <tissue>Embryo</tissue>
    </source>
</reference>
<evidence type="ECO:0000250" key="1">
    <source>
        <dbReference type="UniProtKB" id="Q6WAY2"/>
    </source>
</evidence>
<evidence type="ECO:0000250" key="2">
    <source>
        <dbReference type="UniProtKB" id="Q8TBJ4"/>
    </source>
</evidence>
<evidence type="ECO:0000255" key="3"/>
<evidence type="ECO:0000305" key="4"/>
<comment type="function">
    <text evidence="1">May play a role in neurite outgrowth and neurogenesis.</text>
</comment>
<comment type="subcellular location">
    <subcellularLocation>
        <location evidence="1">Cell membrane</location>
        <topology evidence="3">Multi-pass membrane protein</topology>
    </subcellularLocation>
    <subcellularLocation>
        <location evidence="1">Cell projection</location>
        <location evidence="1">Neuron projection</location>
    </subcellularLocation>
</comment>
<comment type="similarity">
    <text evidence="4">Belongs to the PA-phosphatase related phosphoesterase family.</text>
</comment>
<comment type="caution">
    <text evidence="1">Has no 2-lysophosphatidate/LPA phosphatase activity. This is supported by the fact that the phosphatase sequence motifs as well as the His residue acting as a nucleophile in active phosphatases of the PA-phosphatase related phosphoesterase family are not conserved.</text>
</comment>
<sequence length="325" mass="36042">MALETNTHRSYSIIPCFIFVELVIMAGTVLLSYYFECTDTFQVHIQGFFCQDGNLMKPYPGTEDESFISPLVLYCVLAATPTAIIFIGEVTTYFIKSTRENLIVQEKMILTGECCYLNPLFRRIIRFIGVFAFGLFATDIFVNAGQVVTGNLTPYFLTVCKPNYTASDCLIYHQFINSANICTGDPEVIEKARRSFPSKHAALSIYSALYATMYITSTIKTKSSRLAKPVLCLGTLCCAFLTGLNRVSEYRNHCVDVIGGFILGTAIALFLGLCVVHNFKGLYGAQCKPKPEDPRGVPLMAFPRVESPLETLSAQNHSSSMTEVT</sequence>
<feature type="chain" id="PRO_0000317536" description="Phospholipid phosphatase-related protein type 1">
    <location>
        <begin position="1"/>
        <end position="325"/>
    </location>
</feature>
<feature type="transmembrane region" description="Helical" evidence="3">
    <location>
        <begin position="11"/>
        <end position="31"/>
    </location>
</feature>
<feature type="transmembrane region" description="Helical" evidence="3">
    <location>
        <begin position="67"/>
        <end position="87"/>
    </location>
</feature>
<feature type="transmembrane region" description="Helical" evidence="3">
    <location>
        <begin position="127"/>
        <end position="147"/>
    </location>
</feature>
<feature type="transmembrane region" description="Helical" evidence="3">
    <location>
        <begin position="201"/>
        <end position="218"/>
    </location>
</feature>
<feature type="transmembrane region" description="Helical" evidence="3">
    <location>
        <begin position="230"/>
        <end position="247"/>
    </location>
</feature>
<feature type="transmembrane region" description="Helical" evidence="3">
    <location>
        <begin position="257"/>
        <end position="277"/>
    </location>
</feature>
<feature type="glycosylation site" description="N-linked (GlcNAc...) asparagine" evidence="3">
    <location>
        <position position="163"/>
    </location>
</feature>
<feature type="glycosylation site" description="N-linked (GlcNAc...) asparagine" evidence="3">
    <location>
        <position position="316"/>
    </location>
</feature>
<protein>
    <recommendedName>
        <fullName evidence="2">Phospholipid phosphatase-related protein type 1</fullName>
    </recommendedName>
    <alternativeName>
        <fullName evidence="1">Inactive 2-lysophosphatidate phosphatase PLPPR1</fullName>
    </alternativeName>
    <alternativeName>
        <fullName evidence="2">Lipid phosphate phosphatase-related protein type 1</fullName>
    </alternativeName>
</protein>
<accession>A4II83</accession>
<organism>
    <name type="scientific">Xenopus tropicalis</name>
    <name type="common">Western clawed frog</name>
    <name type="synonym">Silurana tropicalis</name>
    <dbReference type="NCBI Taxonomy" id="8364"/>
    <lineage>
        <taxon>Eukaryota</taxon>
        <taxon>Metazoa</taxon>
        <taxon>Chordata</taxon>
        <taxon>Craniata</taxon>
        <taxon>Vertebrata</taxon>
        <taxon>Euteleostomi</taxon>
        <taxon>Amphibia</taxon>
        <taxon>Batrachia</taxon>
        <taxon>Anura</taxon>
        <taxon>Pipoidea</taxon>
        <taxon>Pipidae</taxon>
        <taxon>Xenopodinae</taxon>
        <taxon>Xenopus</taxon>
        <taxon>Silurana</taxon>
    </lineage>
</organism>
<gene>
    <name evidence="2" type="primary">plppr1</name>
    <name type="synonym">lppr1</name>
</gene>
<keyword id="KW-1003">Cell membrane</keyword>
<keyword id="KW-0966">Cell projection</keyword>
<keyword id="KW-0325">Glycoprotein</keyword>
<keyword id="KW-0472">Membrane</keyword>
<keyword id="KW-1185">Reference proteome</keyword>
<keyword id="KW-0812">Transmembrane</keyword>
<keyword id="KW-1133">Transmembrane helix</keyword>
<proteinExistence type="evidence at transcript level"/>
<name>PLPR1_XENTR</name>